<sequence>MNTKLLYRLARNLRFYKKDLIIVIISLLSVSLALLLIGNVFRNLVDQGLVLDRTAAVDKSILYICLLIIILSIASFFRSYFINNVAEKVSSQIRKEAYSNLINYEITEFEELKIGDIISRLTSDIDQISKLIVNFLSFFIRNSVMLVGSIILMFFESFKLASIVIITIPLLLIPIIKFGKHVKALSKKTLESQSLLASDINESFSNIKTIHAFGGQAAKITEFNNLLQDYLTYSAARLKIRALFFAFSMAFIFLGVTLVIWIGALDIVKGNLSSGQIISFIYYAIIAGFSSGGIFELLSEMHLPLAALERIVTIIDKSPIVHNNYSDLKPVNSISLEFKNVNFSYPSRPNLKILNNISFKIDSTQFIGIVGRSGSGKSTLMQLLLRFYVQESGIILVNNQDIALLNPNEIRKLIAYVPQEASIFSGTIKSNIMFGNDSSEEEITEIIKITGIADFTDKIPDGINAKIGEKGVRLSGGQKQRIALARALLRKPQILLLDEAMNALDSQSEQKLLSSIRDIMKGKIVISIAHRISSIESADNILIIDKGAVEAEGTHAHLLKTSDLYRTIYKEVDLL</sequence>
<gene>
    <name type="ordered locus">RBE_0492</name>
</gene>
<keyword id="KW-0067">ATP-binding</keyword>
<keyword id="KW-0997">Cell inner membrane</keyword>
<keyword id="KW-1003">Cell membrane</keyword>
<keyword id="KW-0472">Membrane</keyword>
<keyword id="KW-0547">Nucleotide-binding</keyword>
<keyword id="KW-1278">Translocase</keyword>
<keyword id="KW-0812">Transmembrane</keyword>
<keyword id="KW-1133">Transmembrane helix</keyword>
<keyword id="KW-0813">Transport</keyword>
<name>Y492_RICBR</name>
<dbReference type="EC" id="7.-.-.-"/>
<dbReference type="EMBL" id="CP000087">
    <property type="protein sequence ID" value="ABE04573.1"/>
    <property type="molecule type" value="Genomic_DNA"/>
</dbReference>
<dbReference type="RefSeq" id="WP_011477164.1">
    <property type="nucleotide sequence ID" value="NC_007940.1"/>
</dbReference>
<dbReference type="SMR" id="Q1RJ91"/>
<dbReference type="KEGG" id="rbe:RBE_0492"/>
<dbReference type="eggNOG" id="COG1132">
    <property type="taxonomic scope" value="Bacteria"/>
</dbReference>
<dbReference type="HOGENOM" id="CLU_000604_84_3_5"/>
<dbReference type="OrthoDB" id="9804259at2"/>
<dbReference type="Proteomes" id="UP000001951">
    <property type="component" value="Chromosome"/>
</dbReference>
<dbReference type="GO" id="GO:0005886">
    <property type="term" value="C:plasma membrane"/>
    <property type="evidence" value="ECO:0007669"/>
    <property type="project" value="UniProtKB-SubCell"/>
</dbReference>
<dbReference type="GO" id="GO:0015421">
    <property type="term" value="F:ABC-type oligopeptide transporter activity"/>
    <property type="evidence" value="ECO:0007669"/>
    <property type="project" value="TreeGrafter"/>
</dbReference>
<dbReference type="GO" id="GO:0005524">
    <property type="term" value="F:ATP binding"/>
    <property type="evidence" value="ECO:0007669"/>
    <property type="project" value="UniProtKB-KW"/>
</dbReference>
<dbReference type="GO" id="GO:0016887">
    <property type="term" value="F:ATP hydrolysis activity"/>
    <property type="evidence" value="ECO:0007669"/>
    <property type="project" value="InterPro"/>
</dbReference>
<dbReference type="CDD" id="cd18575">
    <property type="entry name" value="ABC_6TM_bac_exporter_ABCB8_10_like"/>
    <property type="match status" value="1"/>
</dbReference>
<dbReference type="FunFam" id="3.40.50.300:FF:000221">
    <property type="entry name" value="Multidrug ABC transporter ATP-binding protein"/>
    <property type="match status" value="1"/>
</dbReference>
<dbReference type="Gene3D" id="1.20.1560.10">
    <property type="entry name" value="ABC transporter type 1, transmembrane domain"/>
    <property type="match status" value="1"/>
</dbReference>
<dbReference type="Gene3D" id="3.40.50.300">
    <property type="entry name" value="P-loop containing nucleotide triphosphate hydrolases"/>
    <property type="match status" value="1"/>
</dbReference>
<dbReference type="InterPro" id="IPR003593">
    <property type="entry name" value="AAA+_ATPase"/>
</dbReference>
<dbReference type="InterPro" id="IPR011527">
    <property type="entry name" value="ABC1_TM_dom"/>
</dbReference>
<dbReference type="InterPro" id="IPR036640">
    <property type="entry name" value="ABC1_TM_sf"/>
</dbReference>
<dbReference type="InterPro" id="IPR003439">
    <property type="entry name" value="ABC_transporter-like_ATP-bd"/>
</dbReference>
<dbReference type="InterPro" id="IPR017871">
    <property type="entry name" value="ABC_transporter-like_CS"/>
</dbReference>
<dbReference type="InterPro" id="IPR027417">
    <property type="entry name" value="P-loop_NTPase"/>
</dbReference>
<dbReference type="InterPro" id="IPR039421">
    <property type="entry name" value="Type_1_exporter"/>
</dbReference>
<dbReference type="PANTHER" id="PTHR43394:SF1">
    <property type="entry name" value="ATP-BINDING CASSETTE SUB-FAMILY B MEMBER 10, MITOCHONDRIAL"/>
    <property type="match status" value="1"/>
</dbReference>
<dbReference type="PANTHER" id="PTHR43394">
    <property type="entry name" value="ATP-DEPENDENT PERMEASE MDL1, MITOCHONDRIAL"/>
    <property type="match status" value="1"/>
</dbReference>
<dbReference type="Pfam" id="PF00664">
    <property type="entry name" value="ABC_membrane"/>
    <property type="match status" value="1"/>
</dbReference>
<dbReference type="Pfam" id="PF00005">
    <property type="entry name" value="ABC_tran"/>
    <property type="match status" value="1"/>
</dbReference>
<dbReference type="SMART" id="SM00382">
    <property type="entry name" value="AAA"/>
    <property type="match status" value="1"/>
</dbReference>
<dbReference type="SUPFAM" id="SSF90123">
    <property type="entry name" value="ABC transporter transmembrane region"/>
    <property type="match status" value="1"/>
</dbReference>
<dbReference type="SUPFAM" id="SSF52540">
    <property type="entry name" value="P-loop containing nucleoside triphosphate hydrolases"/>
    <property type="match status" value="1"/>
</dbReference>
<dbReference type="PROSITE" id="PS50929">
    <property type="entry name" value="ABC_TM1F"/>
    <property type="match status" value="1"/>
</dbReference>
<dbReference type="PROSITE" id="PS00211">
    <property type="entry name" value="ABC_TRANSPORTER_1"/>
    <property type="match status" value="1"/>
</dbReference>
<dbReference type="PROSITE" id="PS50893">
    <property type="entry name" value="ABC_TRANSPORTER_2"/>
    <property type="match status" value="1"/>
</dbReference>
<reference key="1">
    <citation type="journal article" date="2006" name="PLoS Genet.">
        <title>Genome sequence of Rickettsia bellii illuminates the role of amoebae in gene exchanges between intracellular pathogens.</title>
        <authorList>
            <person name="Ogata H."/>
            <person name="La Scola B."/>
            <person name="Audic S."/>
            <person name="Renesto P."/>
            <person name="Blanc G."/>
            <person name="Robert C."/>
            <person name="Fournier P.-E."/>
            <person name="Claverie J.-M."/>
            <person name="Raoult D."/>
        </authorList>
    </citation>
    <scope>NUCLEOTIDE SEQUENCE [LARGE SCALE GENOMIC DNA]</scope>
    <source>
        <strain>RML369-C</strain>
    </source>
</reference>
<feature type="chain" id="PRO_0000278655" description="Putative export ATP-binding/permease protein RBE_0492">
    <location>
        <begin position="1"/>
        <end position="575"/>
    </location>
</feature>
<feature type="transmembrane region" description="Helical" evidence="3">
    <location>
        <begin position="21"/>
        <end position="41"/>
    </location>
</feature>
<feature type="transmembrane region" description="Helical" evidence="3">
    <location>
        <begin position="61"/>
        <end position="81"/>
    </location>
</feature>
<feature type="transmembrane region" description="Helical" evidence="3">
    <location>
        <begin position="135"/>
        <end position="155"/>
    </location>
</feature>
<feature type="transmembrane region" description="Helical" evidence="3">
    <location>
        <begin position="158"/>
        <end position="178"/>
    </location>
</feature>
<feature type="transmembrane region" description="Helical" evidence="3">
    <location>
        <begin position="242"/>
        <end position="262"/>
    </location>
</feature>
<feature type="transmembrane region" description="Helical" evidence="3">
    <location>
        <begin position="277"/>
        <end position="297"/>
    </location>
</feature>
<feature type="domain" description="ABC transmembrane type-1" evidence="3">
    <location>
        <begin position="20"/>
        <end position="303"/>
    </location>
</feature>
<feature type="domain" description="ABC transporter" evidence="2">
    <location>
        <begin position="336"/>
        <end position="571"/>
    </location>
</feature>
<feature type="binding site" evidence="2">
    <location>
        <begin position="371"/>
        <end position="378"/>
    </location>
    <ligand>
        <name>ATP</name>
        <dbReference type="ChEBI" id="CHEBI:30616"/>
    </ligand>
</feature>
<protein>
    <recommendedName>
        <fullName>Putative export ATP-binding/permease protein RBE_0492</fullName>
        <ecNumber>7.-.-.-</ecNumber>
    </recommendedName>
</protein>
<accession>Q1RJ91</accession>
<proteinExistence type="inferred from homology"/>
<organism>
    <name type="scientific">Rickettsia bellii (strain RML369-C)</name>
    <dbReference type="NCBI Taxonomy" id="336407"/>
    <lineage>
        <taxon>Bacteria</taxon>
        <taxon>Pseudomonadati</taxon>
        <taxon>Pseudomonadota</taxon>
        <taxon>Alphaproteobacteria</taxon>
        <taxon>Rickettsiales</taxon>
        <taxon>Rickettsiaceae</taxon>
        <taxon>Rickettsieae</taxon>
        <taxon>Rickettsia</taxon>
        <taxon>belli group</taxon>
    </lineage>
</organism>
<comment type="function">
    <text evidence="1">Part of an ABC transporter complex. Transmembrane domains (TMD) form a pore in the inner membrane and the ATP-binding domain (NBD) is responsible for energy generation (By similarity).</text>
</comment>
<comment type="subunit">
    <text evidence="1">Homodimer.</text>
</comment>
<comment type="subcellular location">
    <subcellularLocation>
        <location evidence="1">Cell inner membrane</location>
        <topology evidence="3">Multi-pass membrane protein</topology>
    </subcellularLocation>
</comment>
<comment type="domain">
    <text>The ATP-binding domain (NBD) and the transmembrane domain (TMD) are fused.</text>
</comment>
<comment type="similarity">
    <text evidence="4">Belongs to the ABC transporter superfamily.</text>
</comment>
<evidence type="ECO:0000250" key="1"/>
<evidence type="ECO:0000255" key="2">
    <source>
        <dbReference type="PROSITE-ProRule" id="PRU00434"/>
    </source>
</evidence>
<evidence type="ECO:0000255" key="3">
    <source>
        <dbReference type="PROSITE-ProRule" id="PRU00441"/>
    </source>
</evidence>
<evidence type="ECO:0000305" key="4"/>